<sequence>MHGLLLAGLLALPLNVLAHPTESHSSGISRRAIDITSYRLPQISKYTKSDAVPKQDDESFTTSSTGDDNVSSGDYVTTATDWLKKTLPKATYRLVNDHYIGDSGIGHVHFRQTAHGIDIDNTDFNVNIGRDGKVFSFGNSFYDGEIPKANPMVKRDFSDPVNALQVAIQTLNLPVTAKPENVKAKPVEGKENFKFEGTSGAFSDPKAQLVYLQKDGGLVPSWKVETDIGDNWLLTYVDANKNDKVHSVVDYVSAAEYKVYPWGINDPTEGNRTSIHLPWFKTLSTDWHIDGKGWYSTTRGNNAIAQENPTGGPEYENNYRPKSPLFIFKYPYSEAMTPPSSYRDASITQLFYTTNVYHDVLYILGFNEKAGNFQVNNWNKGGVGGDFAILNSQDGSGVNNANFATPPDGQPGRMRMYTWNASTPERDGCFEAGIVIHEYTHGVSNRLTGGPANSRCLAALESGGMGEGWSDFFATAIRLKAGDTRATDYTMGEWASNRPNGIRKYRYSTNLTTNPHMYVDADGLTSVHAIGTIWASMLYELLWNLIDKHGKGDVTKVRPVLKNGVPTDGRHLAMKLVLDGMALQPCLPNFVQARDAILDADKVLTQGSNKCEIWKAFAKRGLGVGAVFNPSKRTGSNELPAGC</sequence>
<dbReference type="EC" id="3.4.24.-"/>
<dbReference type="EMBL" id="FJ267697">
    <property type="protein sequence ID" value="ACJ06665.1"/>
    <property type="molecule type" value="Genomic_DNA"/>
</dbReference>
<dbReference type="EMBL" id="DQ384954">
    <property type="protein sequence ID" value="ABL84992.1"/>
    <property type="molecule type" value="Genomic_DNA"/>
</dbReference>
<dbReference type="SMR" id="B6V874"/>
<dbReference type="MEROPS" id="M36.001"/>
<dbReference type="GlyCosmos" id="B6V874">
    <property type="glycosylation" value="3 sites, No reported glycans"/>
</dbReference>
<dbReference type="VEuPathDB" id="FungiDB:TESG_00401"/>
<dbReference type="GO" id="GO:0005576">
    <property type="term" value="C:extracellular region"/>
    <property type="evidence" value="ECO:0007669"/>
    <property type="project" value="UniProtKB-SubCell"/>
</dbReference>
<dbReference type="GO" id="GO:0004222">
    <property type="term" value="F:metalloendopeptidase activity"/>
    <property type="evidence" value="ECO:0007669"/>
    <property type="project" value="InterPro"/>
</dbReference>
<dbReference type="GO" id="GO:0008270">
    <property type="term" value="F:zinc ion binding"/>
    <property type="evidence" value="ECO:0007669"/>
    <property type="project" value="InterPro"/>
</dbReference>
<dbReference type="GO" id="GO:0006508">
    <property type="term" value="P:proteolysis"/>
    <property type="evidence" value="ECO:0007669"/>
    <property type="project" value="UniProtKB-KW"/>
</dbReference>
<dbReference type="CDD" id="cd09596">
    <property type="entry name" value="M36"/>
    <property type="match status" value="1"/>
</dbReference>
<dbReference type="Gene3D" id="3.10.170.10">
    <property type="match status" value="1"/>
</dbReference>
<dbReference type="Gene3D" id="1.10.390.10">
    <property type="entry name" value="Neutral Protease Domain 2"/>
    <property type="match status" value="1"/>
</dbReference>
<dbReference type="InterPro" id="IPR011096">
    <property type="entry name" value="FTP_domain"/>
</dbReference>
<dbReference type="InterPro" id="IPR050371">
    <property type="entry name" value="Fungal_virulence_M36"/>
</dbReference>
<dbReference type="InterPro" id="IPR001842">
    <property type="entry name" value="Peptidase_M36"/>
</dbReference>
<dbReference type="InterPro" id="IPR027268">
    <property type="entry name" value="Peptidase_M4/M1_CTD_sf"/>
</dbReference>
<dbReference type="PANTHER" id="PTHR33478">
    <property type="entry name" value="EXTRACELLULAR METALLOPROTEINASE MEP"/>
    <property type="match status" value="1"/>
</dbReference>
<dbReference type="PANTHER" id="PTHR33478:SF1">
    <property type="entry name" value="EXTRACELLULAR METALLOPROTEINASE MEP"/>
    <property type="match status" value="1"/>
</dbReference>
<dbReference type="Pfam" id="PF07504">
    <property type="entry name" value="FTP"/>
    <property type="match status" value="1"/>
</dbReference>
<dbReference type="Pfam" id="PF02128">
    <property type="entry name" value="Peptidase_M36"/>
    <property type="match status" value="1"/>
</dbReference>
<dbReference type="PRINTS" id="PR00999">
    <property type="entry name" value="FUNGALYSIN"/>
</dbReference>
<dbReference type="SUPFAM" id="SSF55486">
    <property type="entry name" value="Metalloproteases ('zincins'), catalytic domain"/>
    <property type="match status" value="1"/>
</dbReference>
<dbReference type="PROSITE" id="PS00142">
    <property type="entry name" value="ZINC_PROTEASE"/>
    <property type="match status" value="1"/>
</dbReference>
<comment type="function">
    <text evidence="1">Secreted metalloproteinase probably acting as a virulence factor.</text>
</comment>
<comment type="cofactor">
    <cofactor evidence="1">
        <name>Zn(2+)</name>
        <dbReference type="ChEBI" id="CHEBI:29105"/>
    </cofactor>
    <text evidence="1">Binds 1 zinc ion per subunit.</text>
</comment>
<comment type="subcellular location">
    <subcellularLocation>
        <location evidence="5">Secreted</location>
    </subcellularLocation>
</comment>
<comment type="similarity">
    <text evidence="6">Belongs to the peptidase M36 family.</text>
</comment>
<protein>
    <recommendedName>
        <fullName>Extracellular metalloproteinase 4</fullName>
        <ecNumber>3.4.24.-</ecNumber>
    </recommendedName>
    <alternativeName>
        <fullName>Fungalysin MEP4</fullName>
    </alternativeName>
</protein>
<proteinExistence type="evidence at protein level"/>
<evidence type="ECO:0000250" key="1"/>
<evidence type="ECO:0000255" key="2"/>
<evidence type="ECO:0000255" key="3">
    <source>
        <dbReference type="PROSITE-ProRule" id="PRU10095"/>
    </source>
</evidence>
<evidence type="ECO:0000256" key="4">
    <source>
        <dbReference type="SAM" id="MobiDB-lite"/>
    </source>
</evidence>
<evidence type="ECO:0000269" key="5">
    <source>
    </source>
</evidence>
<evidence type="ECO:0000305" key="6"/>
<gene>
    <name type="primary">MEP4</name>
</gene>
<keyword id="KW-0325">Glycoprotein</keyword>
<keyword id="KW-0378">Hydrolase</keyword>
<keyword id="KW-0479">Metal-binding</keyword>
<keyword id="KW-0482">Metalloprotease</keyword>
<keyword id="KW-0645">Protease</keyword>
<keyword id="KW-0964">Secreted</keyword>
<keyword id="KW-0732">Signal</keyword>
<keyword id="KW-0843">Virulence</keyword>
<keyword id="KW-0862">Zinc</keyword>
<keyword id="KW-0865">Zymogen</keyword>
<name>MEP4_TRITO</name>
<organism>
    <name type="scientific">Trichophyton tonsurans</name>
    <name type="common">Scalp ringworm fungus</name>
    <dbReference type="NCBI Taxonomy" id="34387"/>
    <lineage>
        <taxon>Eukaryota</taxon>
        <taxon>Fungi</taxon>
        <taxon>Dikarya</taxon>
        <taxon>Ascomycota</taxon>
        <taxon>Pezizomycotina</taxon>
        <taxon>Eurotiomycetes</taxon>
        <taxon>Eurotiomycetidae</taxon>
        <taxon>Onygenales</taxon>
        <taxon>Arthrodermataceae</taxon>
        <taxon>Trichophyton</taxon>
    </lineage>
</organism>
<feature type="signal peptide" evidence="2">
    <location>
        <begin position="1"/>
        <end position="18"/>
    </location>
</feature>
<feature type="propeptide" id="PRO_0000380870" evidence="1">
    <location>
        <begin position="19"/>
        <end position="254"/>
    </location>
</feature>
<feature type="chain" id="PRO_0000380871" description="Extracellular metalloproteinase 4">
    <location>
        <begin position="255"/>
        <end position="643"/>
    </location>
</feature>
<feature type="region of interest" description="Disordered" evidence="4">
    <location>
        <begin position="47"/>
        <end position="71"/>
    </location>
</feature>
<feature type="compositionally biased region" description="Basic and acidic residues" evidence="4">
    <location>
        <begin position="47"/>
        <end position="57"/>
    </location>
</feature>
<feature type="compositionally biased region" description="Polar residues" evidence="4">
    <location>
        <begin position="60"/>
        <end position="71"/>
    </location>
</feature>
<feature type="active site" evidence="3">
    <location>
        <position position="438"/>
    </location>
</feature>
<feature type="binding site" evidence="3">
    <location>
        <position position="437"/>
    </location>
    <ligand>
        <name>Zn(2+)</name>
        <dbReference type="ChEBI" id="CHEBI:29105"/>
        <note>catalytic</note>
    </ligand>
</feature>
<feature type="binding site" evidence="3">
    <location>
        <position position="441"/>
    </location>
    <ligand>
        <name>Zn(2+)</name>
        <dbReference type="ChEBI" id="CHEBI:29105"/>
        <note>catalytic</note>
    </ligand>
</feature>
<feature type="glycosylation site" description="N-linked (GlcNAc...) asparagine" evidence="2">
    <location>
        <position position="271"/>
    </location>
</feature>
<feature type="glycosylation site" description="N-linked (GlcNAc...) asparagine" evidence="2">
    <location>
        <position position="420"/>
    </location>
</feature>
<feature type="glycosylation site" description="N-linked (GlcNAc...) asparagine" evidence="2">
    <location>
        <position position="510"/>
    </location>
</feature>
<reference key="1">
    <citation type="submission" date="2008-10" db="EMBL/GenBank/DDBJ databases">
        <title>Comparing putative pathogenicity factors between Trichophyton tonsurans and Trichophyton equinum.</title>
        <authorList>
            <person name="Preuett B.L."/>
            <person name="Abdel-Rahman S.M."/>
        </authorList>
    </citation>
    <scope>NUCLEOTIDE SEQUENCE [GENOMIC DNA]</scope>
</reference>
<reference key="2">
    <citation type="journal article" date="2007" name="FEMS Microbiol. Lett.">
        <title>Closely related dermatophyte species produce different patterns of secreted proteins.</title>
        <authorList>
            <person name="Giddey K."/>
            <person name="Favre B."/>
            <person name="Quadroni M."/>
            <person name="Monod M."/>
        </authorList>
    </citation>
    <scope>NUCLEOTIDE SEQUENCE [GENOMIC DNA] OF 245-636</scope>
    <scope>IDENTIFICATION BY MASS SPECTROMETRY</scope>
    <scope>SUBCELLULAR LOCATION</scope>
    <source>
        <strain>ER 6906</strain>
    </source>
</reference>
<accession>B6V874</accession>
<accession>A1XIM4</accession>